<feature type="signal peptide" evidence="5">
    <location>
        <begin position="1"/>
        <end position="16"/>
    </location>
</feature>
<feature type="propeptide" id="PRO_0000028776" description="Activation peptide" evidence="1">
    <location>
        <begin position="17"/>
        <end position="105"/>
    </location>
</feature>
<feature type="chain" id="PRO_0000028777" description="Macrophage metalloelastase">
    <location>
        <begin position="106"/>
        <end position="470"/>
    </location>
</feature>
<feature type="repeat" description="Hemopexin 1">
    <location>
        <begin position="279"/>
        <end position="328"/>
    </location>
</feature>
<feature type="repeat" description="Hemopexin 2">
    <location>
        <begin position="329"/>
        <end position="375"/>
    </location>
</feature>
<feature type="repeat" description="Hemopexin 3">
    <location>
        <begin position="377"/>
        <end position="425"/>
    </location>
</feature>
<feature type="repeat" description="Hemopexin 4">
    <location>
        <begin position="426"/>
        <end position="470"/>
    </location>
</feature>
<feature type="short sequence motif" description="Cysteine switch" evidence="1">
    <location>
        <begin position="90"/>
        <end position="97"/>
    </location>
</feature>
<feature type="active site">
    <location>
        <position position="219"/>
    </location>
</feature>
<feature type="binding site" description="in inhibited form" evidence="1">
    <location>
        <position position="92"/>
    </location>
    <ligand>
        <name>Zn(2+)</name>
        <dbReference type="ChEBI" id="CHEBI:29105"/>
        <label>2</label>
        <note>catalytic</note>
    </ligand>
</feature>
<feature type="binding site">
    <location>
        <position position="124"/>
    </location>
    <ligand>
        <name>Ca(2+)</name>
        <dbReference type="ChEBI" id="CHEBI:29108"/>
        <label>1</label>
    </ligand>
</feature>
<feature type="binding site">
    <location>
        <position position="158"/>
    </location>
    <ligand>
        <name>Ca(2+)</name>
        <dbReference type="ChEBI" id="CHEBI:29108"/>
        <label>2</label>
    </ligand>
</feature>
<feature type="binding site">
    <location>
        <position position="168"/>
    </location>
    <ligand>
        <name>Zn(2+)</name>
        <dbReference type="ChEBI" id="CHEBI:29105"/>
        <label>1</label>
    </ligand>
</feature>
<feature type="binding site">
    <location>
        <position position="170"/>
    </location>
    <ligand>
        <name>Zn(2+)</name>
        <dbReference type="ChEBI" id="CHEBI:29105"/>
        <label>1</label>
    </ligand>
</feature>
<feature type="binding site">
    <location>
        <position position="175"/>
    </location>
    <ligand>
        <name>Ca(2+)</name>
        <dbReference type="ChEBI" id="CHEBI:29108"/>
        <label>3</label>
    </ligand>
</feature>
<feature type="binding site">
    <location>
        <position position="176"/>
    </location>
    <ligand>
        <name>Ca(2+)</name>
        <dbReference type="ChEBI" id="CHEBI:29108"/>
        <label>3</label>
    </ligand>
</feature>
<feature type="binding site">
    <location>
        <position position="178"/>
    </location>
    <ligand>
        <name>Ca(2+)</name>
        <dbReference type="ChEBI" id="CHEBI:29108"/>
        <label>3</label>
    </ligand>
</feature>
<feature type="binding site">
    <location>
        <position position="180"/>
    </location>
    <ligand>
        <name>Ca(2+)</name>
        <dbReference type="ChEBI" id="CHEBI:29108"/>
        <label>3</label>
    </ligand>
</feature>
<feature type="binding site">
    <location>
        <position position="183"/>
    </location>
    <ligand>
        <name>Zn(2+)</name>
        <dbReference type="ChEBI" id="CHEBI:29105"/>
        <label>1</label>
    </ligand>
</feature>
<feature type="binding site">
    <location>
        <position position="190"/>
    </location>
    <ligand>
        <name>Ca(2+)</name>
        <dbReference type="ChEBI" id="CHEBI:29108"/>
        <label>2</label>
    </ligand>
</feature>
<feature type="binding site">
    <location>
        <position position="192"/>
    </location>
    <ligand>
        <name>Ca(2+)</name>
        <dbReference type="ChEBI" id="CHEBI:29108"/>
        <label>2</label>
    </ligand>
</feature>
<feature type="binding site">
    <location>
        <position position="194"/>
    </location>
    <ligand>
        <name>Ca(2+)</name>
        <dbReference type="ChEBI" id="CHEBI:29108"/>
        <label>2</label>
    </ligand>
</feature>
<feature type="binding site">
    <location>
        <position position="196"/>
    </location>
    <ligand>
        <name>Zn(2+)</name>
        <dbReference type="ChEBI" id="CHEBI:29105"/>
        <label>1</label>
    </ligand>
</feature>
<feature type="binding site">
    <location>
        <position position="198"/>
    </location>
    <ligand>
        <name>Ca(2+)</name>
        <dbReference type="ChEBI" id="CHEBI:29108"/>
        <label>3</label>
    </ligand>
</feature>
<feature type="binding site">
    <location>
        <position position="199"/>
    </location>
    <ligand>
        <name>Ca(2+)</name>
        <dbReference type="ChEBI" id="CHEBI:29108"/>
        <label>1</label>
    </ligand>
</feature>
<feature type="binding site">
    <location>
        <position position="201"/>
    </location>
    <ligand>
        <name>Ca(2+)</name>
        <dbReference type="ChEBI" id="CHEBI:29108"/>
        <label>1</label>
    </ligand>
</feature>
<feature type="binding site">
    <location>
        <position position="201"/>
    </location>
    <ligand>
        <name>Ca(2+)</name>
        <dbReference type="ChEBI" id="CHEBI:29108"/>
        <label>3</label>
    </ligand>
</feature>
<feature type="binding site">
    <location>
        <position position="218"/>
    </location>
    <ligand>
        <name>Zn(2+)</name>
        <dbReference type="ChEBI" id="CHEBI:29105"/>
        <label>2</label>
        <note>catalytic</note>
    </ligand>
</feature>
<feature type="binding site">
    <location>
        <position position="222"/>
    </location>
    <ligand>
        <name>Zn(2+)</name>
        <dbReference type="ChEBI" id="CHEBI:29105"/>
        <label>2</label>
        <note>catalytic</note>
    </ligand>
</feature>
<feature type="binding site">
    <location>
        <position position="228"/>
    </location>
    <ligand>
        <name>Zn(2+)</name>
        <dbReference type="ChEBI" id="CHEBI:29105"/>
        <label>2</label>
        <note>catalytic</note>
    </ligand>
</feature>
<feature type="binding site" evidence="1">
    <location>
        <position position="289"/>
    </location>
    <ligand>
        <name>Ca(2+)</name>
        <dbReference type="ChEBI" id="CHEBI:29108"/>
        <label>4</label>
    </ligand>
</feature>
<feature type="binding site" evidence="1">
    <location>
        <position position="333"/>
    </location>
    <ligand>
        <name>Ca(2+)</name>
        <dbReference type="ChEBI" id="CHEBI:29108"/>
        <label>4</label>
    </ligand>
</feature>
<feature type="binding site" evidence="1">
    <location>
        <position position="381"/>
    </location>
    <ligand>
        <name>Ca(2+)</name>
        <dbReference type="ChEBI" id="CHEBI:29108"/>
        <label>4</label>
    </ligand>
</feature>
<feature type="binding site" evidence="1">
    <location>
        <position position="430"/>
    </location>
    <ligand>
        <name>Ca(2+)</name>
        <dbReference type="ChEBI" id="CHEBI:29108"/>
        <label>4</label>
    </ligand>
</feature>
<feature type="glycosylation site" description="N-linked (GlcNAc...) asparagine" evidence="2">
    <location>
        <position position="20"/>
    </location>
</feature>
<feature type="glycosylation site" description="N-linked (GlcNAc...) asparagine" evidence="2">
    <location>
        <position position="285"/>
    </location>
</feature>
<feature type="disulfide bond" evidence="1">
    <location>
        <begin position="282"/>
        <end position="470"/>
    </location>
</feature>
<feature type="sequence variant" id="VAR_021343" description="In dbSNP:rs652438." evidence="3 4">
    <original>N</original>
    <variation>S</variation>
    <location>
        <position position="357"/>
    </location>
</feature>
<feature type="sequence variant" id="VAR_021344" description="In dbSNP:rs28381701." evidence="4">
    <original>G</original>
    <variation>R</variation>
    <location>
        <position position="469"/>
    </location>
</feature>
<feature type="strand" evidence="9">
    <location>
        <begin position="106"/>
        <end position="108"/>
    </location>
</feature>
<feature type="strand" evidence="7">
    <location>
        <begin position="110"/>
        <end position="118"/>
    </location>
</feature>
<feature type="strand" evidence="10">
    <location>
        <begin position="123"/>
        <end position="125"/>
    </location>
</feature>
<feature type="helix" evidence="7">
    <location>
        <begin position="127"/>
        <end position="142"/>
    </location>
</feature>
<feature type="strand" evidence="12">
    <location>
        <begin position="144"/>
        <end position="146"/>
    </location>
</feature>
<feature type="strand" evidence="7">
    <location>
        <begin position="148"/>
        <end position="151"/>
    </location>
</feature>
<feature type="strand" evidence="7">
    <location>
        <begin position="153"/>
        <end position="155"/>
    </location>
</feature>
<feature type="strand" evidence="7">
    <location>
        <begin position="158"/>
        <end position="164"/>
    </location>
</feature>
<feature type="strand" evidence="7">
    <location>
        <begin position="169"/>
        <end position="171"/>
    </location>
</feature>
<feature type="strand" evidence="7">
    <location>
        <begin position="176"/>
        <end position="179"/>
    </location>
</feature>
<feature type="strand" evidence="7">
    <location>
        <begin position="182"/>
        <end position="184"/>
    </location>
</feature>
<feature type="strand" evidence="6">
    <location>
        <begin position="187"/>
        <end position="189"/>
    </location>
</feature>
<feature type="turn" evidence="7">
    <location>
        <begin position="190"/>
        <end position="193"/>
    </location>
</feature>
<feature type="strand" evidence="7">
    <location>
        <begin position="195"/>
        <end position="198"/>
    </location>
</feature>
<feature type="strand" evidence="7">
    <location>
        <begin position="203"/>
        <end position="211"/>
    </location>
</feature>
<feature type="helix" evidence="7">
    <location>
        <begin position="212"/>
        <end position="223"/>
    </location>
</feature>
<feature type="turn" evidence="11">
    <location>
        <begin position="232"/>
        <end position="236"/>
    </location>
</feature>
<feature type="strand" evidence="7">
    <location>
        <begin position="237"/>
        <end position="239"/>
    </location>
</feature>
<feature type="helix" evidence="7">
    <location>
        <begin position="245"/>
        <end position="247"/>
    </location>
</feature>
<feature type="helix" evidence="7">
    <location>
        <begin position="252"/>
        <end position="259"/>
    </location>
</feature>
<feature type="strand" evidence="11">
    <location>
        <begin position="260"/>
        <end position="262"/>
    </location>
</feature>
<feature type="strand" evidence="11">
    <location>
        <begin position="266"/>
        <end position="268"/>
    </location>
</feature>
<feature type="strand" evidence="8">
    <location>
        <begin position="281"/>
        <end position="284"/>
    </location>
</feature>
<feature type="strand" evidence="11">
    <location>
        <begin position="291"/>
        <end position="294"/>
    </location>
</feature>
<feature type="strand" evidence="11">
    <location>
        <begin position="297"/>
        <end position="302"/>
    </location>
</feature>
<feature type="strand" evidence="11">
    <location>
        <begin position="305"/>
        <end position="308"/>
    </location>
</feature>
<feature type="strand" evidence="11">
    <location>
        <begin position="318"/>
        <end position="320"/>
    </location>
</feature>
<feature type="helix" evidence="11">
    <location>
        <begin position="321"/>
        <end position="324"/>
    </location>
</feature>
<feature type="strand" evidence="11">
    <location>
        <begin position="334"/>
        <end position="338"/>
    </location>
</feature>
<feature type="helix" evidence="11">
    <location>
        <begin position="339"/>
        <end position="341"/>
    </location>
</feature>
<feature type="strand" evidence="11">
    <location>
        <begin position="343"/>
        <end position="348"/>
    </location>
</feature>
<feature type="strand" evidence="11">
    <location>
        <begin position="351"/>
        <end position="354"/>
    </location>
</feature>
<feature type="strand" evidence="8">
    <location>
        <begin position="357"/>
        <end position="360"/>
    </location>
</feature>
<feature type="turn" evidence="11">
    <location>
        <begin position="361"/>
        <end position="363"/>
    </location>
</feature>
<feature type="strand" evidence="11">
    <location>
        <begin position="365"/>
        <end position="367"/>
    </location>
</feature>
<feature type="turn" evidence="11">
    <location>
        <begin position="368"/>
        <end position="372"/>
    </location>
</feature>
<feature type="strand" evidence="11">
    <location>
        <begin position="382"/>
        <end position="386"/>
    </location>
</feature>
<feature type="turn" evidence="11">
    <location>
        <begin position="387"/>
        <end position="390"/>
    </location>
</feature>
<feature type="strand" evidence="11">
    <location>
        <begin position="391"/>
        <end position="396"/>
    </location>
</feature>
<feature type="strand" evidence="11">
    <location>
        <begin position="399"/>
        <end position="404"/>
    </location>
</feature>
<feature type="turn" evidence="11">
    <location>
        <begin position="405"/>
        <end position="408"/>
    </location>
</feature>
<feature type="helix" evidence="11">
    <location>
        <begin position="418"/>
        <end position="421"/>
    </location>
</feature>
<feature type="strand" evidence="11">
    <location>
        <begin position="430"/>
        <end position="435"/>
    </location>
</feature>
<feature type="turn" evidence="11">
    <location>
        <begin position="436"/>
        <end position="438"/>
    </location>
</feature>
<feature type="strand" evidence="11">
    <location>
        <begin position="439"/>
        <end position="444"/>
    </location>
</feature>
<feature type="strand" evidence="11">
    <location>
        <begin position="447"/>
        <end position="452"/>
    </location>
</feature>
<feature type="turn" evidence="11">
    <location>
        <begin position="453"/>
        <end position="456"/>
    </location>
</feature>
<feature type="strand" evidence="11">
    <location>
        <begin position="457"/>
        <end position="463"/>
    </location>
</feature>
<feature type="turn" evidence="11">
    <location>
        <begin position="464"/>
        <end position="469"/>
    </location>
</feature>
<proteinExistence type="evidence at protein level"/>
<comment type="function">
    <text>May be involved in tissue injury and remodeling. Has significant elastolytic activity. Can accept large and small amino acids at the P1' site, but has a preference for leucine. Aromatic or hydrophobic residues are preferred at the P1 site, with small hydrophobic residues (preferably alanine) occupying P3.</text>
</comment>
<comment type="catalytic activity">
    <reaction>
        <text>Hydrolysis of soluble and insoluble elastin. Specific cleavages are also produced at 14-Ala-|-Leu-15 and 16-Tyr-|-Leu-17 in the B chain of insulin.</text>
        <dbReference type="EC" id="3.4.24.65"/>
    </reaction>
</comment>
<comment type="cofactor">
    <cofactor>
        <name>Ca(2+)</name>
        <dbReference type="ChEBI" id="CHEBI:29108"/>
    </cofactor>
    <text>Binds 4 Ca(2+) ions per subunit.</text>
</comment>
<comment type="cofactor">
    <cofactor>
        <name>Zn(2+)</name>
        <dbReference type="ChEBI" id="CHEBI:29105"/>
    </cofactor>
    <text>Binds 2 Zn(2+) ions per subunit.</text>
</comment>
<comment type="subcellular location">
    <subcellularLocation>
        <location evidence="5">Secreted</location>
        <location evidence="5">Extracellular space</location>
        <location evidence="5">Extracellular matrix</location>
    </subcellularLocation>
</comment>
<comment type="tissue specificity">
    <text>Found in alveolar macrophages but not in peripheral blood monocytes.</text>
</comment>
<comment type="induction">
    <text>By exposure to bacterial lipopolysaccharides (LPS). Inhibited by dexamethasone.</text>
</comment>
<comment type="domain">
    <text>The conserved cysteine present in the cysteine-switch motif binds the catalytic zinc ion, thus inhibiting the enzyme. The dissociation of the cysteine from the zinc ion upon the activation-peptide release activates the enzyme.</text>
</comment>
<comment type="similarity">
    <text evidence="5">Belongs to the peptidase M10A family.</text>
</comment>
<keyword id="KW-0002">3D-structure</keyword>
<keyword id="KW-0106">Calcium</keyword>
<keyword id="KW-1015">Disulfide bond</keyword>
<keyword id="KW-0272">Extracellular matrix</keyword>
<keyword id="KW-0325">Glycoprotein</keyword>
<keyword id="KW-0378">Hydrolase</keyword>
<keyword id="KW-0479">Metal-binding</keyword>
<keyword id="KW-0482">Metalloprotease</keyword>
<keyword id="KW-0645">Protease</keyword>
<keyword id="KW-1267">Proteomics identification</keyword>
<keyword id="KW-1185">Reference proteome</keyword>
<keyword id="KW-0677">Repeat</keyword>
<keyword id="KW-0964">Secreted</keyword>
<keyword id="KW-0732">Signal</keyword>
<keyword id="KW-0862">Zinc</keyword>
<keyword id="KW-0865">Zymogen</keyword>
<accession>P39900</accession>
<accession>B2R9X8</accession>
<accession>B7ZLF6</accession>
<accession>Q2M1L9</accession>
<dbReference type="EC" id="3.4.24.65"/>
<dbReference type="EMBL" id="L23808">
    <property type="protein sequence ID" value="AAA58658.1"/>
    <property type="status" value="ALT_SEQ"/>
    <property type="molecule type" value="mRNA"/>
</dbReference>
<dbReference type="EMBL" id="AY856072">
    <property type="protein sequence ID" value="AAW29944.1"/>
    <property type="molecule type" value="Genomic_DNA"/>
</dbReference>
<dbReference type="EMBL" id="AK313959">
    <property type="protein sequence ID" value="BAG36675.1"/>
    <property type="molecule type" value="mRNA"/>
</dbReference>
<dbReference type="EMBL" id="CH471065">
    <property type="protein sequence ID" value="EAW67033.1"/>
    <property type="molecule type" value="Genomic_DNA"/>
</dbReference>
<dbReference type="EMBL" id="BC112301">
    <property type="protein sequence ID" value="AAI12302.1"/>
    <property type="molecule type" value="mRNA"/>
</dbReference>
<dbReference type="EMBL" id="BC143773">
    <property type="protein sequence ID" value="AAI43774.1"/>
    <property type="molecule type" value="mRNA"/>
</dbReference>
<dbReference type="CCDS" id="CCDS73375.1"/>
<dbReference type="PIR" id="A49499">
    <property type="entry name" value="A49499"/>
</dbReference>
<dbReference type="RefSeq" id="NP_002417.2">
    <property type="nucleotide sequence ID" value="NM_002426.6"/>
</dbReference>
<dbReference type="PDB" id="1JIZ">
    <property type="method" value="X-ray"/>
    <property type="resolution" value="2.60 A"/>
    <property type="chains" value="A/B=100-264"/>
</dbReference>
<dbReference type="PDB" id="1JK3">
    <property type="method" value="X-ray"/>
    <property type="resolution" value="1.09 A"/>
    <property type="chains" value="A=106-263"/>
</dbReference>
<dbReference type="PDB" id="1OS2">
    <property type="method" value="X-ray"/>
    <property type="resolution" value="2.15 A"/>
    <property type="chains" value="A/B/C/D/E/F=106-268"/>
</dbReference>
<dbReference type="PDB" id="1OS9">
    <property type="method" value="X-ray"/>
    <property type="resolution" value="1.85 A"/>
    <property type="chains" value="A/B/C/D/E/F=106-268"/>
</dbReference>
<dbReference type="PDB" id="1RMZ">
    <property type="method" value="X-ray"/>
    <property type="resolution" value="1.34 A"/>
    <property type="chains" value="A=106-263"/>
</dbReference>
<dbReference type="PDB" id="1ROS">
    <property type="method" value="X-ray"/>
    <property type="resolution" value="2.00 A"/>
    <property type="chains" value="A/B=106-268"/>
</dbReference>
<dbReference type="PDB" id="1UTT">
    <property type="method" value="X-ray"/>
    <property type="resolution" value="2.20 A"/>
    <property type="chains" value="A=106-264"/>
</dbReference>
<dbReference type="PDB" id="1UTZ">
    <property type="method" value="X-ray"/>
    <property type="resolution" value="2.50 A"/>
    <property type="chains" value="A/B=106-264"/>
</dbReference>
<dbReference type="PDB" id="1Y93">
    <property type="method" value="X-ray"/>
    <property type="resolution" value="1.03 A"/>
    <property type="chains" value="A=106-263"/>
</dbReference>
<dbReference type="PDB" id="1YCM">
    <property type="method" value="NMR"/>
    <property type="chains" value="A=106-263"/>
</dbReference>
<dbReference type="PDB" id="1Z3J">
    <property type="method" value="NMR"/>
    <property type="chains" value="A=106-263"/>
</dbReference>
<dbReference type="PDB" id="2HU6">
    <property type="method" value="X-ray"/>
    <property type="resolution" value="1.32 A"/>
    <property type="chains" value="A=106-263"/>
</dbReference>
<dbReference type="PDB" id="2JXY">
    <property type="method" value="NMR"/>
    <property type="chains" value="A=278-470"/>
</dbReference>
<dbReference type="PDB" id="2K2G">
    <property type="method" value="NMR"/>
    <property type="chains" value="A=100-263"/>
</dbReference>
<dbReference type="PDB" id="2K9C">
    <property type="method" value="NMR"/>
    <property type="chains" value="A=112-263"/>
</dbReference>
<dbReference type="PDB" id="2KRJ">
    <property type="method" value="NMR"/>
    <property type="chains" value="A=112-263"/>
</dbReference>
<dbReference type="PDB" id="2MLR">
    <property type="method" value="NMR"/>
    <property type="chains" value="A=100-263"/>
</dbReference>
<dbReference type="PDB" id="2MLS">
    <property type="method" value="NMR"/>
    <property type="chains" value="A=100-263"/>
</dbReference>
<dbReference type="PDB" id="2N8R">
    <property type="method" value="NMR"/>
    <property type="chains" value="A=100-263"/>
</dbReference>
<dbReference type="PDB" id="2OXU">
    <property type="method" value="X-ray"/>
    <property type="resolution" value="1.24 A"/>
    <property type="chains" value="A=106-263"/>
</dbReference>
<dbReference type="PDB" id="2OXW">
    <property type="method" value="X-ray"/>
    <property type="resolution" value="1.15 A"/>
    <property type="chains" value="A=106-263"/>
</dbReference>
<dbReference type="PDB" id="2OXZ">
    <property type="method" value="X-ray"/>
    <property type="resolution" value="1.90 A"/>
    <property type="chains" value="A=106-263"/>
</dbReference>
<dbReference type="PDB" id="2POJ">
    <property type="method" value="NMR"/>
    <property type="chains" value="A=100-263"/>
</dbReference>
<dbReference type="PDB" id="2W0D">
    <property type="method" value="X-ray"/>
    <property type="resolution" value="2.00 A"/>
    <property type="chains" value="A/B/C/D=106-263"/>
</dbReference>
<dbReference type="PDB" id="2WO8">
    <property type="method" value="X-ray"/>
    <property type="resolution" value="2.00 A"/>
    <property type="chains" value="A/B/C/D=106-268"/>
</dbReference>
<dbReference type="PDB" id="2WO9">
    <property type="method" value="X-ray"/>
    <property type="resolution" value="1.70 A"/>
    <property type="chains" value="A/B/C/D=106-268"/>
</dbReference>
<dbReference type="PDB" id="2WOA">
    <property type="method" value="X-ray"/>
    <property type="resolution" value="2.30 A"/>
    <property type="chains" value="A/B/C/D=106-268"/>
</dbReference>
<dbReference type="PDB" id="2Z2D">
    <property type="method" value="NMR"/>
    <property type="chains" value="A=100-263"/>
</dbReference>
<dbReference type="PDB" id="3BA0">
    <property type="method" value="X-ray"/>
    <property type="resolution" value="3.00 A"/>
    <property type="chains" value="A=106-470"/>
</dbReference>
<dbReference type="PDB" id="3EHX">
    <property type="method" value="X-ray"/>
    <property type="resolution" value="1.90 A"/>
    <property type="chains" value="A=106-263"/>
</dbReference>
<dbReference type="PDB" id="3EHY">
    <property type="method" value="X-ray"/>
    <property type="resolution" value="1.90 A"/>
    <property type="chains" value="A=106-263"/>
</dbReference>
<dbReference type="PDB" id="3F15">
    <property type="method" value="X-ray"/>
    <property type="resolution" value="1.70 A"/>
    <property type="chains" value="A=106-263"/>
</dbReference>
<dbReference type="PDB" id="3F16">
    <property type="method" value="X-ray"/>
    <property type="resolution" value="1.16 A"/>
    <property type="chains" value="A=106-263"/>
</dbReference>
<dbReference type="PDB" id="3F17">
    <property type="method" value="X-ray"/>
    <property type="resolution" value="1.10 A"/>
    <property type="chains" value="A=106-263"/>
</dbReference>
<dbReference type="PDB" id="3F18">
    <property type="method" value="X-ray"/>
    <property type="resolution" value="1.13 A"/>
    <property type="chains" value="A=106-263"/>
</dbReference>
<dbReference type="PDB" id="3F19">
    <property type="method" value="X-ray"/>
    <property type="resolution" value="1.13 A"/>
    <property type="chains" value="A=106-263"/>
</dbReference>
<dbReference type="PDB" id="3F1A">
    <property type="method" value="X-ray"/>
    <property type="resolution" value="1.25 A"/>
    <property type="chains" value="A=106-263"/>
</dbReference>
<dbReference type="PDB" id="3LIK">
    <property type="method" value="X-ray"/>
    <property type="resolution" value="1.80 A"/>
    <property type="chains" value="A=106-263"/>
</dbReference>
<dbReference type="PDB" id="3LIL">
    <property type="method" value="X-ray"/>
    <property type="resolution" value="1.80 A"/>
    <property type="chains" value="A=106-263"/>
</dbReference>
<dbReference type="PDB" id="3LIR">
    <property type="method" value="X-ray"/>
    <property type="resolution" value="1.90 A"/>
    <property type="chains" value="A=106-263"/>
</dbReference>
<dbReference type="PDB" id="3LJG">
    <property type="method" value="X-ray"/>
    <property type="resolution" value="1.31 A"/>
    <property type="chains" value="A=106-263"/>
</dbReference>
<dbReference type="PDB" id="3LK8">
    <property type="method" value="X-ray"/>
    <property type="resolution" value="1.80 A"/>
    <property type="chains" value="A=106-263"/>
</dbReference>
<dbReference type="PDB" id="3LKA">
    <property type="method" value="X-ray"/>
    <property type="resolution" value="1.80 A"/>
    <property type="chains" value="A=106-263"/>
</dbReference>
<dbReference type="PDB" id="3N2U">
    <property type="method" value="X-ray"/>
    <property type="resolution" value="1.81 A"/>
    <property type="chains" value="A=106-263"/>
</dbReference>
<dbReference type="PDB" id="3N2V">
    <property type="method" value="X-ray"/>
    <property type="resolution" value="1.55 A"/>
    <property type="chains" value="A=106-263"/>
</dbReference>
<dbReference type="PDB" id="3NX7">
    <property type="method" value="X-ray"/>
    <property type="resolution" value="1.80 A"/>
    <property type="chains" value="A=106-263"/>
</dbReference>
<dbReference type="PDB" id="3RTS">
    <property type="method" value="X-ray"/>
    <property type="resolution" value="1.81 A"/>
    <property type="chains" value="A=106-263"/>
</dbReference>
<dbReference type="PDB" id="3RTT">
    <property type="method" value="X-ray"/>
    <property type="resolution" value="1.82 A"/>
    <property type="chains" value="A=106-263"/>
</dbReference>
<dbReference type="PDB" id="3TS4">
    <property type="method" value="X-ray"/>
    <property type="resolution" value="1.59 A"/>
    <property type="chains" value="A=106-263"/>
</dbReference>
<dbReference type="PDB" id="3TSK">
    <property type="method" value="X-ray"/>
    <property type="resolution" value="2.00 A"/>
    <property type="chains" value="A=106-263"/>
</dbReference>
<dbReference type="PDB" id="3UVC">
    <property type="method" value="X-ray"/>
    <property type="resolution" value="1.30 A"/>
    <property type="chains" value="A/B=106-263"/>
</dbReference>
<dbReference type="PDB" id="4EFS">
    <property type="method" value="X-ray"/>
    <property type="resolution" value="1.63 A"/>
    <property type="chains" value="A=106-263"/>
</dbReference>
<dbReference type="PDB" id="4GQL">
    <property type="method" value="X-ray"/>
    <property type="resolution" value="1.15 A"/>
    <property type="chains" value="A=106-263"/>
</dbReference>
<dbReference type="PDB" id="4GR0">
    <property type="method" value="X-ray"/>
    <property type="resolution" value="1.50 A"/>
    <property type="chains" value="A=106-263"/>
</dbReference>
<dbReference type="PDB" id="4GR3">
    <property type="method" value="X-ray"/>
    <property type="resolution" value="1.49 A"/>
    <property type="chains" value="A=106-263"/>
</dbReference>
<dbReference type="PDB" id="4GR8">
    <property type="method" value="X-ray"/>
    <property type="resolution" value="1.30 A"/>
    <property type="chains" value="A=111-262"/>
</dbReference>
<dbReference type="PDB" id="4GUY">
    <property type="method" value="X-ray"/>
    <property type="resolution" value="2.00 A"/>
    <property type="chains" value="A=106-263"/>
</dbReference>
<dbReference type="PDB" id="4H30">
    <property type="method" value="X-ray"/>
    <property type="resolution" value="1.43 A"/>
    <property type="chains" value="A/B=106-263"/>
</dbReference>
<dbReference type="PDB" id="4H49">
    <property type="method" value="X-ray"/>
    <property type="resolution" value="2.16 A"/>
    <property type="chains" value="A/B/C/D=106-263"/>
</dbReference>
<dbReference type="PDB" id="4H76">
    <property type="method" value="X-ray"/>
    <property type="resolution" value="1.50 A"/>
    <property type="chains" value="A=106-263"/>
</dbReference>
<dbReference type="PDB" id="4H84">
    <property type="method" value="X-ray"/>
    <property type="resolution" value="1.59 A"/>
    <property type="chains" value="A/B=106-263"/>
</dbReference>
<dbReference type="PDB" id="4I03">
    <property type="method" value="X-ray"/>
    <property type="resolution" value="1.70 A"/>
    <property type="chains" value="A=106-263"/>
</dbReference>
<dbReference type="PDB" id="4IJO">
    <property type="method" value="X-ray"/>
    <property type="resolution" value="1.90 A"/>
    <property type="chains" value="A=106-263"/>
</dbReference>
<dbReference type="PDB" id="5CXA">
    <property type="method" value="X-ray"/>
    <property type="resolution" value="1.30 A"/>
    <property type="chains" value="A=106-263"/>
</dbReference>
<dbReference type="PDB" id="5CZM">
    <property type="method" value="X-ray"/>
    <property type="resolution" value="1.30 A"/>
    <property type="chains" value="A=106-263"/>
</dbReference>
<dbReference type="PDB" id="5D2B">
    <property type="method" value="X-ray"/>
    <property type="resolution" value="1.20 A"/>
    <property type="chains" value="A=106-263"/>
</dbReference>
<dbReference type="PDB" id="5D3C">
    <property type="method" value="X-ray"/>
    <property type="resolution" value="1.31 A"/>
    <property type="chains" value="A=106-263"/>
</dbReference>
<dbReference type="PDB" id="5I0L">
    <property type="method" value="X-ray"/>
    <property type="resolution" value="2.45 A"/>
    <property type="chains" value="A/B=106-263"/>
</dbReference>
<dbReference type="PDB" id="5I2Z">
    <property type="method" value="X-ray"/>
    <property type="resolution" value="2.30 A"/>
    <property type="chains" value="A/B/C/D=106-263"/>
</dbReference>
<dbReference type="PDB" id="5I3M">
    <property type="method" value="X-ray"/>
    <property type="resolution" value="2.17 A"/>
    <property type="chains" value="A/B/C/D=106-263"/>
</dbReference>
<dbReference type="PDB" id="5I43">
    <property type="method" value="X-ray"/>
    <property type="resolution" value="1.95 A"/>
    <property type="chains" value="A/B/C/D=106-263"/>
</dbReference>
<dbReference type="PDB" id="5I4O">
    <property type="method" value="X-ray"/>
    <property type="resolution" value="2.05 A"/>
    <property type="chains" value="A/B/C/D=106-263"/>
</dbReference>
<dbReference type="PDB" id="5L79">
    <property type="method" value="X-ray"/>
    <property type="resolution" value="2.07 A"/>
    <property type="chains" value="A=106-263"/>
</dbReference>
<dbReference type="PDB" id="5L7F">
    <property type="method" value="X-ray"/>
    <property type="resolution" value="1.80 A"/>
    <property type="chains" value="A/B=106-263"/>
</dbReference>
<dbReference type="PDB" id="5LAB">
    <property type="method" value="X-ray"/>
    <property type="resolution" value="1.34 A"/>
    <property type="chains" value="A=106-263"/>
</dbReference>
<dbReference type="PDB" id="5N5J">
    <property type="method" value="X-ray"/>
    <property type="resolution" value="1.80 A"/>
    <property type="chains" value="A=106-263"/>
</dbReference>
<dbReference type="PDB" id="5N5K">
    <property type="method" value="X-ray"/>
    <property type="resolution" value="1.80 A"/>
    <property type="chains" value="A=108-263"/>
</dbReference>
<dbReference type="PDB" id="6EKN">
    <property type="method" value="X-ray"/>
    <property type="resolution" value="1.20 A"/>
    <property type="chains" value="A=106-263"/>
</dbReference>
<dbReference type="PDB" id="6ELA">
    <property type="method" value="X-ray"/>
    <property type="resolution" value="1.49 A"/>
    <property type="chains" value="A/B/C/D=106-263"/>
</dbReference>
<dbReference type="PDB" id="6ENM">
    <property type="method" value="X-ray"/>
    <property type="resolution" value="1.59 A"/>
    <property type="chains" value="A/B=106-263"/>
</dbReference>
<dbReference type="PDB" id="6EOX">
    <property type="method" value="X-ray"/>
    <property type="resolution" value="1.30 A"/>
    <property type="chains" value="A=106-263"/>
</dbReference>
<dbReference type="PDB" id="6RD0">
    <property type="method" value="X-ray"/>
    <property type="resolution" value="1.90 A"/>
    <property type="chains" value="A=106-263"/>
</dbReference>
<dbReference type="PDB" id="6RLY">
    <property type="method" value="X-ray"/>
    <property type="resolution" value="2.20 A"/>
    <property type="chains" value="A=106-263"/>
</dbReference>
<dbReference type="PDB" id="7OVY">
    <property type="method" value="X-ray"/>
    <property type="resolution" value="1.24 A"/>
    <property type="chains" value="A=106-263"/>
</dbReference>
<dbReference type="PDB" id="8B2N">
    <property type="method" value="X-ray"/>
    <property type="resolution" value="1.85 A"/>
    <property type="chains" value="A/C=106-263"/>
</dbReference>
<dbReference type="PDB" id="8RIJ">
    <property type="method" value="X-ray"/>
    <property type="resolution" value="1.96 A"/>
    <property type="chains" value="A=106-263"/>
</dbReference>
<dbReference type="PDBsum" id="1JIZ"/>
<dbReference type="PDBsum" id="1JK3"/>
<dbReference type="PDBsum" id="1OS2"/>
<dbReference type="PDBsum" id="1OS9"/>
<dbReference type="PDBsum" id="1RMZ"/>
<dbReference type="PDBsum" id="1ROS"/>
<dbReference type="PDBsum" id="1UTT"/>
<dbReference type="PDBsum" id="1UTZ"/>
<dbReference type="PDBsum" id="1Y93"/>
<dbReference type="PDBsum" id="1YCM"/>
<dbReference type="PDBsum" id="1Z3J"/>
<dbReference type="PDBsum" id="2HU6"/>
<dbReference type="PDBsum" id="2JXY"/>
<dbReference type="PDBsum" id="2K2G"/>
<dbReference type="PDBsum" id="2K9C"/>
<dbReference type="PDBsum" id="2KRJ"/>
<dbReference type="PDBsum" id="2MLR"/>
<dbReference type="PDBsum" id="2MLS"/>
<dbReference type="PDBsum" id="2N8R"/>
<dbReference type="PDBsum" id="2OXU"/>
<dbReference type="PDBsum" id="2OXW"/>
<dbReference type="PDBsum" id="2OXZ"/>
<dbReference type="PDBsum" id="2POJ"/>
<dbReference type="PDBsum" id="2W0D"/>
<dbReference type="PDBsum" id="2WO8"/>
<dbReference type="PDBsum" id="2WO9"/>
<dbReference type="PDBsum" id="2WOA"/>
<dbReference type="PDBsum" id="2Z2D"/>
<dbReference type="PDBsum" id="3BA0"/>
<dbReference type="PDBsum" id="3EHX"/>
<dbReference type="PDBsum" id="3EHY"/>
<dbReference type="PDBsum" id="3F15"/>
<dbReference type="PDBsum" id="3F16"/>
<dbReference type="PDBsum" id="3F17"/>
<dbReference type="PDBsum" id="3F18"/>
<dbReference type="PDBsum" id="3F19"/>
<dbReference type="PDBsum" id="3F1A"/>
<dbReference type="PDBsum" id="3LIK"/>
<dbReference type="PDBsum" id="3LIL"/>
<dbReference type="PDBsum" id="3LIR"/>
<dbReference type="PDBsum" id="3LJG"/>
<dbReference type="PDBsum" id="3LK8"/>
<dbReference type="PDBsum" id="3LKA"/>
<dbReference type="PDBsum" id="3N2U"/>
<dbReference type="PDBsum" id="3N2V"/>
<dbReference type="PDBsum" id="3NX7"/>
<dbReference type="PDBsum" id="3RTS"/>
<dbReference type="PDBsum" id="3RTT"/>
<dbReference type="PDBsum" id="3TS4"/>
<dbReference type="PDBsum" id="3TSK"/>
<dbReference type="PDBsum" id="3UVC"/>
<dbReference type="PDBsum" id="4EFS"/>
<dbReference type="PDBsum" id="4GQL"/>
<dbReference type="PDBsum" id="4GR0"/>
<dbReference type="PDBsum" id="4GR3"/>
<dbReference type="PDBsum" id="4GR8"/>
<dbReference type="PDBsum" id="4GUY"/>
<dbReference type="PDBsum" id="4H30"/>
<dbReference type="PDBsum" id="4H49"/>
<dbReference type="PDBsum" id="4H76"/>
<dbReference type="PDBsum" id="4H84"/>
<dbReference type="PDBsum" id="4I03"/>
<dbReference type="PDBsum" id="4IJO"/>
<dbReference type="PDBsum" id="5CXA"/>
<dbReference type="PDBsum" id="5CZM"/>
<dbReference type="PDBsum" id="5D2B"/>
<dbReference type="PDBsum" id="5D3C"/>
<dbReference type="PDBsum" id="5I0L"/>
<dbReference type="PDBsum" id="5I2Z"/>
<dbReference type="PDBsum" id="5I3M"/>
<dbReference type="PDBsum" id="5I43"/>
<dbReference type="PDBsum" id="5I4O"/>
<dbReference type="PDBsum" id="5L79"/>
<dbReference type="PDBsum" id="5L7F"/>
<dbReference type="PDBsum" id="5LAB"/>
<dbReference type="PDBsum" id="5N5J"/>
<dbReference type="PDBsum" id="5N5K"/>
<dbReference type="PDBsum" id="6EKN"/>
<dbReference type="PDBsum" id="6ELA"/>
<dbReference type="PDBsum" id="6ENM"/>
<dbReference type="PDBsum" id="6EOX"/>
<dbReference type="PDBsum" id="6RD0"/>
<dbReference type="PDBsum" id="6RLY"/>
<dbReference type="PDBsum" id="7OVY"/>
<dbReference type="PDBsum" id="8B2N"/>
<dbReference type="PDBsum" id="8RIJ"/>
<dbReference type="BMRB" id="P39900"/>
<dbReference type="SASBDB" id="P39900"/>
<dbReference type="SMR" id="P39900"/>
<dbReference type="BioGRID" id="110464">
    <property type="interactions" value="6"/>
</dbReference>
<dbReference type="FunCoup" id="P39900">
    <property type="interactions" value="21"/>
</dbReference>
<dbReference type="IntAct" id="P39900">
    <property type="interactions" value="3"/>
</dbReference>
<dbReference type="MINT" id="P39900"/>
<dbReference type="STRING" id="9606.ENSP00000458585"/>
<dbReference type="BindingDB" id="P39900"/>
<dbReference type="ChEMBL" id="CHEMBL4393"/>
<dbReference type="DrugBank" id="DB07026">
    <property type="generic name" value="(1S,5S,7R)-N~7~-(BIPHENYL-4-YLMETHYL)-N~3~-HYDROXY-6,8-DIOXA-3-AZABICYCLO[3.2.1]OCTANE-3,7-DICARBOXAMIDE"/>
</dbReference>
<dbReference type="DrugBank" id="DB07921">
    <property type="generic name" value="2-[(4-fluorophenyl)sulfonylamino]-N-oxo-ethanamide"/>
</dbReference>
<dbReference type="DrugBank" id="DB04405">
    <property type="generic name" value="2-[2-(1,3-Dioxo-1,3-Dihydro-2h-Isoindol-2-Yl)Ethyl]-4-(4'-Ethoxy-1,1'-Biphenyl-4-Yl)-4-Oxobutanoic Acid"/>
</dbReference>
<dbReference type="DrugBank" id="DB14511">
    <property type="generic name" value="Acetate"/>
</dbReference>
<dbReference type="DrugBank" id="DB00551">
    <property type="generic name" value="Acetohydroxamic acid"/>
</dbReference>
<dbReference type="DrugBank" id="DB11961">
    <property type="generic name" value="AZD-1236"/>
</dbReference>
<dbReference type="DrugBank" id="DB03880">
    <property type="generic name" value="Batimastat"/>
</dbReference>
<dbReference type="DrugBank" id="DB07556">
    <property type="generic name" value="CGS-27023"/>
</dbReference>
<dbReference type="DrugBank" id="DB02118">
    <property type="generic name" value="CP-271485"/>
</dbReference>
<dbReference type="DrugBank" id="DB02255">
    <property type="generic name" value="Ilomastat"/>
</dbReference>
<dbReference type="DrugBank" id="DB00786">
    <property type="generic name" value="Marimastat"/>
</dbReference>
<dbReference type="DrugBank" id="DB07446">
    <property type="generic name" value="N-(biphenyl-4-ylsulfonyl)-D-leucine"/>
</dbReference>
<dbReference type="DrugBank" id="DB07683">
    <property type="generic name" value="N-(dibenzo[b,d]thiophen-3-ylsulfonyl)-L-valine"/>
</dbReference>
<dbReference type="DrugBank" id="DB08599">
    <property type="generic name" value="N-[(4-methoxyphenyl)sulfonyl]-D-alanine"/>
</dbReference>
<dbReference type="DrugBank" id="DB08271">
    <property type="generic name" value="N-ISOBUTYL-N-[4-METHOXYPHENYLSULFONYL]GLYCYL HYDROXAMIC ACID"/>
</dbReference>
<dbReference type="DrugBank" id="DB07922">
    <property type="generic name" value="N-oxo-2-(phenylsulfonylamino)ethanamide"/>
</dbReference>
<dbReference type="DrugBank" id="DB07920">
    <property type="generic name" value="N-oxo-2-[(4-phenylphenyl)sulfonylamino]ethanamide"/>
</dbReference>
<dbReference type="DrugBank" id="DB05387">
    <property type="generic name" value="Neovastat"/>
</dbReference>
<dbReference type="DrugBank" id="DB03367">
    <property type="generic name" value="PF-00356231"/>
</dbReference>
<dbReference type="DrugBank" id="DB00013">
    <property type="generic name" value="Urokinase"/>
</dbReference>
<dbReference type="DrugCentral" id="P39900"/>
<dbReference type="GuidetoPHARMACOLOGY" id="1636"/>
<dbReference type="MEROPS" id="M10.009"/>
<dbReference type="GlyCosmos" id="P39900">
    <property type="glycosylation" value="2 sites, No reported glycans"/>
</dbReference>
<dbReference type="GlyGen" id="P39900">
    <property type="glycosylation" value="2 sites"/>
</dbReference>
<dbReference type="iPTMnet" id="P39900"/>
<dbReference type="PhosphoSitePlus" id="P39900"/>
<dbReference type="BioMuta" id="MMP12"/>
<dbReference type="DMDM" id="729179"/>
<dbReference type="MassIVE" id="P39900"/>
<dbReference type="PaxDb" id="9606-ENSP00000458585"/>
<dbReference type="PeptideAtlas" id="P39900"/>
<dbReference type="ProteomicsDB" id="55327"/>
<dbReference type="TopDownProteomics" id="P39900"/>
<dbReference type="ABCD" id="P39900">
    <property type="antibodies" value="7 sequenced antibodies"/>
</dbReference>
<dbReference type="Antibodypedia" id="61960">
    <property type="antibodies" value="641 antibodies from 40 providers"/>
</dbReference>
<dbReference type="DNASU" id="4321"/>
<dbReference type="Ensembl" id="ENST00000571244.3">
    <property type="protein sequence ID" value="ENSP00000458585.1"/>
    <property type="gene ID" value="ENSG00000262406.3"/>
</dbReference>
<dbReference type="GeneID" id="4321"/>
<dbReference type="KEGG" id="hsa:4321"/>
<dbReference type="MANE-Select" id="ENST00000571244.3">
    <property type="protein sequence ID" value="ENSP00000458585.1"/>
    <property type="RefSeq nucleotide sequence ID" value="NM_002426.6"/>
    <property type="RefSeq protein sequence ID" value="NP_002417.2"/>
</dbReference>
<dbReference type="UCSC" id="uc031yde.2">
    <property type="organism name" value="human"/>
</dbReference>
<dbReference type="AGR" id="HGNC:7158"/>
<dbReference type="CTD" id="4321"/>
<dbReference type="DisGeNET" id="4321"/>
<dbReference type="GeneCards" id="MMP12"/>
<dbReference type="HGNC" id="HGNC:7158">
    <property type="gene designation" value="MMP12"/>
</dbReference>
<dbReference type="HPA" id="ENSG00000262406">
    <property type="expression patterns" value="Tissue enhanced (intestine, lymphoid tissue, urinary bladder)"/>
</dbReference>
<dbReference type="MIM" id="601046">
    <property type="type" value="gene"/>
</dbReference>
<dbReference type="neXtProt" id="NX_P39900"/>
<dbReference type="OpenTargets" id="ENSG00000262406"/>
<dbReference type="PharmGKB" id="PA30870"/>
<dbReference type="VEuPathDB" id="HostDB:ENSG00000262406"/>
<dbReference type="eggNOG" id="KOG1565">
    <property type="taxonomic scope" value="Eukaryota"/>
</dbReference>
<dbReference type="GeneTree" id="ENSGT00940000162085"/>
<dbReference type="HOGENOM" id="CLU_015489_6_0_1"/>
<dbReference type="InParanoid" id="P39900"/>
<dbReference type="OMA" id="NYPKSIH"/>
<dbReference type="OrthoDB" id="406838at2759"/>
<dbReference type="PAN-GO" id="P39900">
    <property type="GO annotations" value="3 GO annotations based on evolutionary models"/>
</dbReference>
<dbReference type="PhylomeDB" id="P39900"/>
<dbReference type="BRENDA" id="3.4.24.65">
    <property type="organism ID" value="2681"/>
</dbReference>
<dbReference type="PathwayCommons" id="P39900"/>
<dbReference type="Reactome" id="R-HSA-1442490">
    <property type="pathway name" value="Collagen degradation"/>
</dbReference>
<dbReference type="Reactome" id="R-HSA-1474228">
    <property type="pathway name" value="Degradation of the extracellular matrix"/>
</dbReference>
<dbReference type="SignaLink" id="P39900"/>
<dbReference type="SIGNOR" id="P39900"/>
<dbReference type="BioGRID-ORCS" id="4321">
    <property type="hits" value="8 hits in 271 CRISPR screens"/>
</dbReference>
<dbReference type="ChiTaRS" id="MMP12">
    <property type="organism name" value="human"/>
</dbReference>
<dbReference type="EvolutionaryTrace" id="P39900"/>
<dbReference type="GeneWiki" id="Matrix_metallopeptidase_12"/>
<dbReference type="GenomeRNAi" id="4321"/>
<dbReference type="Pharos" id="P39900">
    <property type="development level" value="Tchem"/>
</dbReference>
<dbReference type="PRO" id="PR:P39900"/>
<dbReference type="Proteomes" id="UP000005640">
    <property type="component" value="Chromosome 11"/>
</dbReference>
<dbReference type="RNAct" id="P39900">
    <property type="molecule type" value="protein"/>
</dbReference>
<dbReference type="Bgee" id="ENSG00000262406">
    <property type="expression patterns" value="Expressed in periodontal ligament and 92 other cell types or tissues"/>
</dbReference>
<dbReference type="GO" id="GO:0005737">
    <property type="term" value="C:cytoplasm"/>
    <property type="evidence" value="ECO:0000314"/>
    <property type="project" value="CAFA"/>
</dbReference>
<dbReference type="GO" id="GO:0031012">
    <property type="term" value="C:extracellular matrix"/>
    <property type="evidence" value="ECO:0007669"/>
    <property type="project" value="InterPro"/>
</dbReference>
<dbReference type="GO" id="GO:0005576">
    <property type="term" value="C:extracellular region"/>
    <property type="evidence" value="ECO:0000304"/>
    <property type="project" value="Reactome"/>
</dbReference>
<dbReference type="GO" id="GO:0005615">
    <property type="term" value="C:extracellular space"/>
    <property type="evidence" value="ECO:0000315"/>
    <property type="project" value="CAFA"/>
</dbReference>
<dbReference type="GO" id="GO:0005634">
    <property type="term" value="C:nucleus"/>
    <property type="evidence" value="ECO:0000315"/>
    <property type="project" value="CAFA"/>
</dbReference>
<dbReference type="GO" id="GO:0005509">
    <property type="term" value="F:calcium ion binding"/>
    <property type="evidence" value="ECO:0000315"/>
    <property type="project" value="CAFA"/>
</dbReference>
<dbReference type="GO" id="GO:0005518">
    <property type="term" value="F:collagen binding"/>
    <property type="evidence" value="ECO:0000353"/>
    <property type="project" value="CAFA"/>
</dbReference>
<dbReference type="GO" id="GO:0001046">
    <property type="term" value="F:core promoter sequence-specific DNA binding"/>
    <property type="evidence" value="ECO:0000315"/>
    <property type="project" value="CAFA"/>
</dbReference>
<dbReference type="GO" id="GO:0004175">
    <property type="term" value="F:endopeptidase activity"/>
    <property type="evidence" value="ECO:0000304"/>
    <property type="project" value="UniProtKB"/>
</dbReference>
<dbReference type="GO" id="GO:0004222">
    <property type="term" value="F:metalloendopeptidase activity"/>
    <property type="evidence" value="ECO:0000314"/>
    <property type="project" value="CAFA"/>
</dbReference>
<dbReference type="GO" id="GO:0043565">
    <property type="term" value="F:sequence-specific DNA binding"/>
    <property type="evidence" value="ECO:0000315"/>
    <property type="project" value="CAFA"/>
</dbReference>
<dbReference type="GO" id="GO:0004252">
    <property type="term" value="F:serine-type endopeptidase activity"/>
    <property type="evidence" value="ECO:0000304"/>
    <property type="project" value="Reactome"/>
</dbReference>
<dbReference type="GO" id="GO:0008270">
    <property type="term" value="F:zinc ion binding"/>
    <property type="evidence" value="ECO:0000315"/>
    <property type="project" value="CAFA"/>
</dbReference>
<dbReference type="GO" id="GO:0060435">
    <property type="term" value="P:bronchiole development"/>
    <property type="evidence" value="ECO:0007669"/>
    <property type="project" value="Ensembl"/>
</dbReference>
<dbReference type="GO" id="GO:0098586">
    <property type="term" value="P:cellular response to virus"/>
    <property type="evidence" value="ECO:0007669"/>
    <property type="project" value="Ensembl"/>
</dbReference>
<dbReference type="GO" id="GO:0030574">
    <property type="term" value="P:collagen catabolic process"/>
    <property type="evidence" value="ECO:0000318"/>
    <property type="project" value="GO_Central"/>
</dbReference>
<dbReference type="GO" id="GO:0060309">
    <property type="term" value="P:elastin catabolic process"/>
    <property type="evidence" value="ECO:0000314"/>
    <property type="project" value="ARUK-UCL"/>
</dbReference>
<dbReference type="GO" id="GO:0022617">
    <property type="term" value="P:extracellular matrix disassembly"/>
    <property type="evidence" value="ECO:0000304"/>
    <property type="project" value="Reactome"/>
</dbReference>
<dbReference type="GO" id="GO:0030198">
    <property type="term" value="P:extracellular matrix organization"/>
    <property type="evidence" value="ECO:0000318"/>
    <property type="project" value="GO_Central"/>
</dbReference>
<dbReference type="GO" id="GO:0048286">
    <property type="term" value="P:lung alveolus development"/>
    <property type="evidence" value="ECO:0007669"/>
    <property type="project" value="Ensembl"/>
</dbReference>
<dbReference type="GO" id="GO:1904905">
    <property type="term" value="P:negative regulation of endothelial cell-matrix adhesion via fibronectin"/>
    <property type="evidence" value="ECO:0000314"/>
    <property type="project" value="ARUK-UCL"/>
</dbReference>
<dbReference type="GO" id="GO:0000122">
    <property type="term" value="P:negative regulation of transcription by RNA polymerase II"/>
    <property type="evidence" value="ECO:0007669"/>
    <property type="project" value="Ensembl"/>
</dbReference>
<dbReference type="GO" id="GO:0060339">
    <property type="term" value="P:negative regulation of type I interferon-mediated signaling pathway"/>
    <property type="evidence" value="ECO:0007669"/>
    <property type="project" value="Ensembl"/>
</dbReference>
<dbReference type="GO" id="GO:0060054">
    <property type="term" value="P:positive regulation of epithelial cell proliferation involved in wound healing"/>
    <property type="evidence" value="ECO:0000314"/>
    <property type="project" value="BHF-UCL"/>
</dbReference>
<dbReference type="GO" id="GO:0032727">
    <property type="term" value="P:positive regulation of interferon-alpha production"/>
    <property type="evidence" value="ECO:0007669"/>
    <property type="project" value="Ensembl"/>
</dbReference>
<dbReference type="GO" id="GO:0045944">
    <property type="term" value="P:positive regulation of transcription by RNA polymerase II"/>
    <property type="evidence" value="ECO:0000315"/>
    <property type="project" value="CAFA"/>
</dbReference>
<dbReference type="GO" id="GO:0060340">
    <property type="term" value="P:positive regulation of type I interferon-mediated signaling pathway"/>
    <property type="evidence" value="ECO:0007669"/>
    <property type="project" value="Ensembl"/>
</dbReference>
<dbReference type="GO" id="GO:0006606">
    <property type="term" value="P:protein import into nucleus"/>
    <property type="evidence" value="ECO:0000315"/>
    <property type="project" value="CAFA"/>
</dbReference>
<dbReference type="GO" id="GO:0006508">
    <property type="term" value="P:proteolysis"/>
    <property type="evidence" value="ECO:0000314"/>
    <property type="project" value="CAFA"/>
</dbReference>
<dbReference type="GO" id="GO:0050691">
    <property type="term" value="P:regulation of defense response to virus by host"/>
    <property type="evidence" value="ECO:0007669"/>
    <property type="project" value="Ensembl"/>
</dbReference>
<dbReference type="GO" id="GO:1904645">
    <property type="term" value="P:response to amyloid-beta"/>
    <property type="evidence" value="ECO:0000304"/>
    <property type="project" value="ARUK-UCL"/>
</dbReference>
<dbReference type="GO" id="GO:0035313">
    <property type="term" value="P:wound healing, spreading of epidermal cells"/>
    <property type="evidence" value="ECO:0000314"/>
    <property type="project" value="BHF-UCL"/>
</dbReference>
<dbReference type="CDD" id="cd00094">
    <property type="entry name" value="HX"/>
    <property type="match status" value="1"/>
</dbReference>
<dbReference type="CDD" id="cd04278">
    <property type="entry name" value="ZnMc_MMP"/>
    <property type="match status" value="1"/>
</dbReference>
<dbReference type="FunFam" id="3.40.390.10:FF:000007">
    <property type="entry name" value="Collagenase 3"/>
    <property type="match status" value="1"/>
</dbReference>
<dbReference type="FunFam" id="2.110.10.10:FF:000002">
    <property type="entry name" value="Matrix metallopeptidase 3"/>
    <property type="match status" value="1"/>
</dbReference>
<dbReference type="Gene3D" id="3.40.390.10">
    <property type="entry name" value="Collagenase (Catalytic Domain)"/>
    <property type="match status" value="1"/>
</dbReference>
<dbReference type="Gene3D" id="2.110.10.10">
    <property type="entry name" value="Hemopexin-like domain"/>
    <property type="match status" value="1"/>
</dbReference>
<dbReference type="InterPro" id="IPR000585">
    <property type="entry name" value="Hemopexin-like_dom"/>
</dbReference>
<dbReference type="InterPro" id="IPR036375">
    <property type="entry name" value="Hemopexin-like_dom_sf"/>
</dbReference>
<dbReference type="InterPro" id="IPR018487">
    <property type="entry name" value="Hemopexin-like_repeat"/>
</dbReference>
<dbReference type="InterPro" id="IPR018486">
    <property type="entry name" value="Hemopexin_CS"/>
</dbReference>
<dbReference type="InterPro" id="IPR033739">
    <property type="entry name" value="M10A_MMP"/>
</dbReference>
<dbReference type="InterPro" id="IPR024079">
    <property type="entry name" value="MetalloPept_cat_dom_sf"/>
</dbReference>
<dbReference type="InterPro" id="IPR001818">
    <property type="entry name" value="Pept_M10_metallopeptidase"/>
</dbReference>
<dbReference type="InterPro" id="IPR021190">
    <property type="entry name" value="Pept_M10A"/>
</dbReference>
<dbReference type="InterPro" id="IPR021158">
    <property type="entry name" value="Pept_M10A_Zn_BS"/>
</dbReference>
<dbReference type="InterPro" id="IPR006026">
    <property type="entry name" value="Peptidase_Metallo"/>
</dbReference>
<dbReference type="InterPro" id="IPR002477">
    <property type="entry name" value="Peptidoglycan-bd-like"/>
</dbReference>
<dbReference type="InterPro" id="IPR036365">
    <property type="entry name" value="PGBD-like_sf"/>
</dbReference>
<dbReference type="PANTHER" id="PTHR10201:SF267">
    <property type="entry name" value="MACROPHAGE METALLOELASTASE"/>
    <property type="match status" value="1"/>
</dbReference>
<dbReference type="PANTHER" id="PTHR10201">
    <property type="entry name" value="MATRIX METALLOPROTEINASE"/>
    <property type="match status" value="1"/>
</dbReference>
<dbReference type="Pfam" id="PF00045">
    <property type="entry name" value="Hemopexin"/>
    <property type="match status" value="4"/>
</dbReference>
<dbReference type="Pfam" id="PF00413">
    <property type="entry name" value="Peptidase_M10"/>
    <property type="match status" value="1"/>
</dbReference>
<dbReference type="Pfam" id="PF01471">
    <property type="entry name" value="PG_binding_1"/>
    <property type="match status" value="1"/>
</dbReference>
<dbReference type="PIRSF" id="PIRSF001191">
    <property type="entry name" value="Peptidase_M10A_matrix"/>
    <property type="match status" value="1"/>
</dbReference>
<dbReference type="PRINTS" id="PR00138">
    <property type="entry name" value="MATRIXIN"/>
</dbReference>
<dbReference type="SMART" id="SM00120">
    <property type="entry name" value="HX"/>
    <property type="match status" value="4"/>
</dbReference>
<dbReference type="SMART" id="SM00235">
    <property type="entry name" value="ZnMc"/>
    <property type="match status" value="1"/>
</dbReference>
<dbReference type="SUPFAM" id="SSF50923">
    <property type="entry name" value="Hemopexin-like domain"/>
    <property type="match status" value="1"/>
</dbReference>
<dbReference type="SUPFAM" id="SSF55486">
    <property type="entry name" value="Metalloproteases ('zincins'), catalytic domain"/>
    <property type="match status" value="1"/>
</dbReference>
<dbReference type="SUPFAM" id="SSF47090">
    <property type="entry name" value="PGBD-like"/>
    <property type="match status" value="1"/>
</dbReference>
<dbReference type="PROSITE" id="PS00546">
    <property type="entry name" value="CYSTEINE_SWITCH"/>
    <property type="match status" value="1"/>
</dbReference>
<dbReference type="PROSITE" id="PS00024">
    <property type="entry name" value="HEMOPEXIN"/>
    <property type="match status" value="1"/>
</dbReference>
<dbReference type="PROSITE" id="PS51642">
    <property type="entry name" value="HEMOPEXIN_2"/>
    <property type="match status" value="4"/>
</dbReference>
<dbReference type="PROSITE" id="PS00142">
    <property type="entry name" value="ZINC_PROTEASE"/>
    <property type="match status" value="1"/>
</dbReference>
<gene>
    <name type="primary">MMP12</name>
    <name type="synonym">HME</name>
</gene>
<protein>
    <recommendedName>
        <fullName>Macrophage metalloelastase</fullName>
        <shortName>MME</shortName>
        <ecNumber>3.4.24.65</ecNumber>
    </recommendedName>
    <alternativeName>
        <fullName>Macrophage elastase</fullName>
        <shortName>ME</shortName>
        <shortName>hME</shortName>
    </alternativeName>
    <alternativeName>
        <fullName>Matrix metalloproteinase-12</fullName>
        <shortName>MMP-12</shortName>
    </alternativeName>
</protein>
<reference key="1">
    <citation type="journal article" date="1993" name="J. Biol. Chem.">
        <title>Cloning and characterization of a unique elastolytic metalloproteinase produced by human alveolar macrophages.</title>
        <authorList>
            <person name="Shapiro S.D."/>
            <person name="Kobayashi D.K."/>
            <person name="Ley T.J."/>
        </authorList>
    </citation>
    <scope>NUCLEOTIDE SEQUENCE [MRNA]</scope>
    <source>
        <tissue>Alveolar macrophage</tissue>
    </source>
</reference>
<reference key="2">
    <citation type="submission" date="2004-12" db="EMBL/GenBank/DDBJ databases">
        <authorList>
            <consortium name="NIEHS SNPs program"/>
        </authorList>
    </citation>
    <scope>NUCLEOTIDE SEQUENCE [GENOMIC DNA]</scope>
    <scope>VARIANTS SER-357 AND ARG-469</scope>
</reference>
<reference key="3">
    <citation type="journal article" date="2004" name="Nat. Genet.">
        <title>Complete sequencing and characterization of 21,243 full-length human cDNAs.</title>
        <authorList>
            <person name="Ota T."/>
            <person name="Suzuki Y."/>
            <person name="Nishikawa T."/>
            <person name="Otsuki T."/>
            <person name="Sugiyama T."/>
            <person name="Irie R."/>
            <person name="Wakamatsu A."/>
            <person name="Hayashi K."/>
            <person name="Sato H."/>
            <person name="Nagai K."/>
            <person name="Kimura K."/>
            <person name="Makita H."/>
            <person name="Sekine M."/>
            <person name="Obayashi M."/>
            <person name="Nishi T."/>
            <person name="Shibahara T."/>
            <person name="Tanaka T."/>
            <person name="Ishii S."/>
            <person name="Yamamoto J."/>
            <person name="Saito K."/>
            <person name="Kawai Y."/>
            <person name="Isono Y."/>
            <person name="Nakamura Y."/>
            <person name="Nagahari K."/>
            <person name="Murakami K."/>
            <person name="Yasuda T."/>
            <person name="Iwayanagi T."/>
            <person name="Wagatsuma M."/>
            <person name="Shiratori A."/>
            <person name="Sudo H."/>
            <person name="Hosoiri T."/>
            <person name="Kaku Y."/>
            <person name="Kodaira H."/>
            <person name="Kondo H."/>
            <person name="Sugawara M."/>
            <person name="Takahashi M."/>
            <person name="Kanda K."/>
            <person name="Yokoi T."/>
            <person name="Furuya T."/>
            <person name="Kikkawa E."/>
            <person name="Omura Y."/>
            <person name="Abe K."/>
            <person name="Kamihara K."/>
            <person name="Katsuta N."/>
            <person name="Sato K."/>
            <person name="Tanikawa M."/>
            <person name="Yamazaki M."/>
            <person name="Ninomiya K."/>
            <person name="Ishibashi T."/>
            <person name="Yamashita H."/>
            <person name="Murakawa K."/>
            <person name="Fujimori K."/>
            <person name="Tanai H."/>
            <person name="Kimata M."/>
            <person name="Watanabe M."/>
            <person name="Hiraoka S."/>
            <person name="Chiba Y."/>
            <person name="Ishida S."/>
            <person name="Ono Y."/>
            <person name="Takiguchi S."/>
            <person name="Watanabe S."/>
            <person name="Yosida M."/>
            <person name="Hotuta T."/>
            <person name="Kusano J."/>
            <person name="Kanehori K."/>
            <person name="Takahashi-Fujii A."/>
            <person name="Hara H."/>
            <person name="Tanase T.-O."/>
            <person name="Nomura Y."/>
            <person name="Togiya S."/>
            <person name="Komai F."/>
            <person name="Hara R."/>
            <person name="Takeuchi K."/>
            <person name="Arita M."/>
            <person name="Imose N."/>
            <person name="Musashino K."/>
            <person name="Yuuki H."/>
            <person name="Oshima A."/>
            <person name="Sasaki N."/>
            <person name="Aotsuka S."/>
            <person name="Yoshikawa Y."/>
            <person name="Matsunawa H."/>
            <person name="Ichihara T."/>
            <person name="Shiohata N."/>
            <person name="Sano S."/>
            <person name="Moriya S."/>
            <person name="Momiyama H."/>
            <person name="Satoh N."/>
            <person name="Takami S."/>
            <person name="Terashima Y."/>
            <person name="Suzuki O."/>
            <person name="Nakagawa S."/>
            <person name="Senoh A."/>
            <person name="Mizoguchi H."/>
            <person name="Goto Y."/>
            <person name="Shimizu F."/>
            <person name="Wakebe H."/>
            <person name="Hishigaki H."/>
            <person name="Watanabe T."/>
            <person name="Sugiyama A."/>
            <person name="Takemoto M."/>
            <person name="Kawakami B."/>
            <person name="Yamazaki M."/>
            <person name="Watanabe K."/>
            <person name="Kumagai A."/>
            <person name="Itakura S."/>
            <person name="Fukuzumi Y."/>
            <person name="Fujimori Y."/>
            <person name="Komiyama M."/>
            <person name="Tashiro H."/>
            <person name="Tanigami A."/>
            <person name="Fujiwara T."/>
            <person name="Ono T."/>
            <person name="Yamada K."/>
            <person name="Fujii Y."/>
            <person name="Ozaki K."/>
            <person name="Hirao M."/>
            <person name="Ohmori Y."/>
            <person name="Kawabata A."/>
            <person name="Hikiji T."/>
            <person name="Kobatake N."/>
            <person name="Inagaki H."/>
            <person name="Ikema Y."/>
            <person name="Okamoto S."/>
            <person name="Okitani R."/>
            <person name="Kawakami T."/>
            <person name="Noguchi S."/>
            <person name="Itoh T."/>
            <person name="Shigeta K."/>
            <person name="Senba T."/>
            <person name="Matsumura K."/>
            <person name="Nakajima Y."/>
            <person name="Mizuno T."/>
            <person name="Morinaga M."/>
            <person name="Sasaki M."/>
            <person name="Togashi T."/>
            <person name="Oyama M."/>
            <person name="Hata H."/>
            <person name="Watanabe M."/>
            <person name="Komatsu T."/>
            <person name="Mizushima-Sugano J."/>
            <person name="Satoh T."/>
            <person name="Shirai Y."/>
            <person name="Takahashi Y."/>
            <person name="Nakagawa K."/>
            <person name="Okumura K."/>
            <person name="Nagase T."/>
            <person name="Nomura N."/>
            <person name="Kikuchi H."/>
            <person name="Masuho Y."/>
            <person name="Yamashita R."/>
            <person name="Nakai K."/>
            <person name="Yada T."/>
            <person name="Nakamura Y."/>
            <person name="Ohara O."/>
            <person name="Isogai T."/>
            <person name="Sugano S."/>
        </authorList>
    </citation>
    <scope>NUCLEOTIDE SEQUENCE [LARGE SCALE MRNA]</scope>
    <source>
        <tissue>Esophagus</tissue>
    </source>
</reference>
<reference key="4">
    <citation type="submission" date="2005-07" db="EMBL/GenBank/DDBJ databases">
        <authorList>
            <person name="Mural R.J."/>
            <person name="Istrail S."/>
            <person name="Sutton G.G."/>
            <person name="Florea L."/>
            <person name="Halpern A.L."/>
            <person name="Mobarry C.M."/>
            <person name="Lippert R."/>
            <person name="Walenz B."/>
            <person name="Shatkay H."/>
            <person name="Dew I."/>
            <person name="Miller J.R."/>
            <person name="Flanigan M.J."/>
            <person name="Edwards N.J."/>
            <person name="Bolanos R."/>
            <person name="Fasulo D."/>
            <person name="Halldorsson B.V."/>
            <person name="Hannenhalli S."/>
            <person name="Turner R."/>
            <person name="Yooseph S."/>
            <person name="Lu F."/>
            <person name="Nusskern D.R."/>
            <person name="Shue B.C."/>
            <person name="Zheng X.H."/>
            <person name="Zhong F."/>
            <person name="Delcher A.L."/>
            <person name="Huson D.H."/>
            <person name="Kravitz S.A."/>
            <person name="Mouchard L."/>
            <person name="Reinert K."/>
            <person name="Remington K.A."/>
            <person name="Clark A.G."/>
            <person name="Waterman M.S."/>
            <person name="Eichler E.E."/>
            <person name="Adams M.D."/>
            <person name="Hunkapiller M.W."/>
            <person name="Myers E.W."/>
            <person name="Venter J.C."/>
        </authorList>
    </citation>
    <scope>NUCLEOTIDE SEQUENCE [LARGE SCALE GENOMIC DNA]</scope>
</reference>
<reference key="5">
    <citation type="journal article" date="2004" name="Genome Res.">
        <title>The status, quality, and expansion of the NIH full-length cDNA project: the Mammalian Gene Collection (MGC).</title>
        <authorList>
            <consortium name="The MGC Project Team"/>
        </authorList>
    </citation>
    <scope>NUCLEOTIDE SEQUENCE [LARGE SCALE MRNA]</scope>
    <scope>VARIANT SER-357</scope>
</reference>
<reference key="6">
    <citation type="journal article" date="1997" name="J. Biol. Chem.">
        <title>Hydrolysis of a broad spectrum of extracellular matrix proteins by human macrophage elastase.</title>
        <authorList>
            <person name="Gronski T.J. Jr."/>
            <person name="Martin R.L."/>
            <person name="Kobayashi D.K."/>
            <person name="Walsh B.C."/>
            <person name="Holman M.C."/>
            <person name="Huber M."/>
            <person name="Van Wart H.E."/>
            <person name="Shapiro S.D."/>
        </authorList>
    </citation>
    <scope>CHARACTERIZATION</scope>
</reference>
<reference key="7">
    <citation type="journal article" date="2001" name="J. Mol. Biol.">
        <title>Substrate specificity determinants of human macrophage elastase (MMP-12) based on the 1.1 A crystal structure.</title>
        <authorList>
            <person name="Lang R."/>
            <person name="Kocourek A."/>
            <person name="Braun M."/>
            <person name="Tschesche H."/>
            <person name="Huber R."/>
            <person name="Bode W."/>
            <person name="Maskos K."/>
        </authorList>
    </citation>
    <scope>X-RAY CRYSTALLOGRAPHY (1.09 ANGSTROMS) OF 106-263</scope>
</reference>
<reference key="8">
    <citation type="journal article" date="2001" name="J. Mol. Biol.">
        <title>Crystal structure of human macrophage elastase (MMP-12) in complex with a hydroxamic acid inhibitor.</title>
        <authorList>
            <person name="Nar H."/>
            <person name="Werle K."/>
            <person name="Bauer M.M.T."/>
            <person name="Dollinger H."/>
            <person name="Jung B."/>
        </authorList>
    </citation>
    <scope>X-RAY CRYSTALLOGRAPHY (2.6 ANGSTROMS) OF 100-280</scope>
</reference>
<organism>
    <name type="scientific">Homo sapiens</name>
    <name type="common">Human</name>
    <dbReference type="NCBI Taxonomy" id="9606"/>
    <lineage>
        <taxon>Eukaryota</taxon>
        <taxon>Metazoa</taxon>
        <taxon>Chordata</taxon>
        <taxon>Craniata</taxon>
        <taxon>Vertebrata</taxon>
        <taxon>Euteleostomi</taxon>
        <taxon>Mammalia</taxon>
        <taxon>Eutheria</taxon>
        <taxon>Euarchontoglires</taxon>
        <taxon>Primates</taxon>
        <taxon>Haplorrhini</taxon>
        <taxon>Catarrhini</taxon>
        <taxon>Hominidae</taxon>
        <taxon>Homo</taxon>
    </lineage>
</organism>
<sequence>MKFLLILLLQATASGALPLNSSTSLEKNNVLFGERYLEKFYGLEINKLPVTKMKYSGNLMKEKIQEMQHFLGLKVTGQLDTSTLEMMHAPRCGVPDVHHFREMPGGPVWRKHYITYRINNYTPDMNREDVDYAIRKAFQVWSNVTPLKFSKINTGMADILVVFARGAHGDFHAFDGKGGILAHAFGPGSGIGGDAHFDEDEFWTTHSGGTNLFLTAVHEIGHSLGLGHSSDPKAVMFPTYKYVDINTFRLSADDIRGIQSLYGDPKENQRLPNPDNSEPALCDPNLSFDAVTTVGNKIFFFKDRFFWLKVSERPKTSVNLISSLWPTLPSGIEAAYEIEARNQVFLFKDDKYWLISNLRPEPNYPKSIHSFGFPNFVKKIDAAVFNPRFYRTYFFVDNQYWRYDERRQMMDPGYPKLITKNFQGIGPKIDAVFYSKNKYYYFFQGSNQFEYDFLLQRITKTLKSNSWFGC</sequence>
<name>MMP12_HUMAN</name>
<evidence type="ECO:0000250" key="1"/>
<evidence type="ECO:0000255" key="2"/>
<evidence type="ECO:0000269" key="3">
    <source>
    </source>
</evidence>
<evidence type="ECO:0000269" key="4">
    <source ref="2"/>
</evidence>
<evidence type="ECO:0000305" key="5"/>
<evidence type="ECO:0007829" key="6">
    <source>
        <dbReference type="PDB" id="1JK3"/>
    </source>
</evidence>
<evidence type="ECO:0007829" key="7">
    <source>
        <dbReference type="PDB" id="1Y93"/>
    </source>
</evidence>
<evidence type="ECO:0007829" key="8">
    <source>
        <dbReference type="PDB" id="2JXY"/>
    </source>
</evidence>
<evidence type="ECO:0007829" key="9">
    <source>
        <dbReference type="PDB" id="2K2G"/>
    </source>
</evidence>
<evidence type="ECO:0007829" key="10">
    <source>
        <dbReference type="PDB" id="2W0D"/>
    </source>
</evidence>
<evidence type="ECO:0007829" key="11">
    <source>
        <dbReference type="PDB" id="3BA0"/>
    </source>
</evidence>
<evidence type="ECO:0007829" key="12">
    <source>
        <dbReference type="PDB" id="4H84"/>
    </source>
</evidence>